<evidence type="ECO:0000255" key="1"/>
<evidence type="ECO:0000255" key="2">
    <source>
        <dbReference type="PROSITE-ProRule" id="PRU00434"/>
    </source>
</evidence>
<evidence type="ECO:0000305" key="3"/>
<protein>
    <recommendedName>
        <fullName>ABC transporter A family member 6</fullName>
    </recommendedName>
    <alternativeName>
        <fullName>ABC transporter ABCA.6</fullName>
    </alternativeName>
</protein>
<name>ABCA6_DICDI</name>
<comment type="subcellular location">
    <subcellularLocation>
        <location evidence="3">Membrane</location>
        <topology evidence="3">Multi-pass membrane protein</topology>
    </subcellularLocation>
</comment>
<comment type="similarity">
    <text evidence="3">Belongs to the ABC transporter superfamily. ABCA family.</text>
</comment>
<proteinExistence type="inferred from homology"/>
<dbReference type="EMBL" id="AF465308">
    <property type="protein sequence ID" value="AAL85299.1"/>
    <property type="molecule type" value="Genomic_DNA"/>
</dbReference>
<dbReference type="EMBL" id="AAFI02000177">
    <property type="protein sequence ID" value="EAL61606.1"/>
    <property type="molecule type" value="Genomic_DNA"/>
</dbReference>
<dbReference type="RefSeq" id="XP_635211.1">
    <property type="nucleotide sequence ID" value="XM_630119.1"/>
</dbReference>
<dbReference type="SMR" id="Q8T6J1"/>
<dbReference type="FunCoup" id="Q8T6J1">
    <property type="interactions" value="149"/>
</dbReference>
<dbReference type="STRING" id="44689.Q8T6J1"/>
<dbReference type="GlyGen" id="Q8T6J1">
    <property type="glycosylation" value="1 site"/>
</dbReference>
<dbReference type="PaxDb" id="44689-DDB0201627"/>
<dbReference type="EnsemblProtists" id="EAL61606">
    <property type="protein sequence ID" value="EAL61606"/>
    <property type="gene ID" value="DDB_G0291245"/>
</dbReference>
<dbReference type="GeneID" id="8628157"/>
<dbReference type="KEGG" id="ddi:DDB_G0291245"/>
<dbReference type="dictyBase" id="DDB_G0291245">
    <property type="gene designation" value="abcA6"/>
</dbReference>
<dbReference type="VEuPathDB" id="AmoebaDB:DDB_G0291245"/>
<dbReference type="eggNOG" id="KOG0059">
    <property type="taxonomic scope" value="Eukaryota"/>
</dbReference>
<dbReference type="HOGENOM" id="CLU_000604_19_1_1"/>
<dbReference type="InParanoid" id="Q8T6J1"/>
<dbReference type="OMA" id="MEFIELE"/>
<dbReference type="PhylomeDB" id="Q8T6J1"/>
<dbReference type="Reactome" id="R-DDI-1369062">
    <property type="pathway name" value="ABC transporters in lipid homeostasis"/>
</dbReference>
<dbReference type="Reactome" id="R-DDI-2453902">
    <property type="pathway name" value="The canonical retinoid cycle in rods (twilight vision)"/>
</dbReference>
<dbReference type="Reactome" id="R-DDI-382556">
    <property type="pathway name" value="ABC-family proteins mediated transport"/>
</dbReference>
<dbReference type="Reactome" id="R-DDI-5683826">
    <property type="pathway name" value="Surfactant metabolism"/>
</dbReference>
<dbReference type="Reactome" id="R-DDI-6798695">
    <property type="pathway name" value="Neutrophil degranulation"/>
</dbReference>
<dbReference type="Reactome" id="R-DDI-8963896">
    <property type="pathway name" value="HDL assembly"/>
</dbReference>
<dbReference type="PRO" id="PR:Q8T6J1"/>
<dbReference type="Proteomes" id="UP000002195">
    <property type="component" value="Chromosome 6"/>
</dbReference>
<dbReference type="GO" id="GO:0043231">
    <property type="term" value="C:intracellular membrane-bounded organelle"/>
    <property type="evidence" value="ECO:0000318"/>
    <property type="project" value="GO_Central"/>
</dbReference>
<dbReference type="GO" id="GO:0016020">
    <property type="term" value="C:membrane"/>
    <property type="evidence" value="ECO:0007669"/>
    <property type="project" value="UniProtKB-SubCell"/>
</dbReference>
<dbReference type="GO" id="GO:0140359">
    <property type="term" value="F:ABC-type transporter activity"/>
    <property type="evidence" value="ECO:0007669"/>
    <property type="project" value="InterPro"/>
</dbReference>
<dbReference type="GO" id="GO:0005524">
    <property type="term" value="F:ATP binding"/>
    <property type="evidence" value="ECO:0007669"/>
    <property type="project" value="UniProtKB-KW"/>
</dbReference>
<dbReference type="GO" id="GO:0016887">
    <property type="term" value="F:ATP hydrolysis activity"/>
    <property type="evidence" value="ECO:0007669"/>
    <property type="project" value="InterPro"/>
</dbReference>
<dbReference type="GO" id="GO:0042626">
    <property type="term" value="F:ATPase-coupled transmembrane transporter activity"/>
    <property type="evidence" value="ECO:0000318"/>
    <property type="project" value="GO_Central"/>
</dbReference>
<dbReference type="GO" id="GO:0005319">
    <property type="term" value="F:lipid transporter activity"/>
    <property type="evidence" value="ECO:0000318"/>
    <property type="project" value="GO_Central"/>
</dbReference>
<dbReference type="GO" id="GO:0006869">
    <property type="term" value="P:lipid transport"/>
    <property type="evidence" value="ECO:0000318"/>
    <property type="project" value="GO_Central"/>
</dbReference>
<dbReference type="GO" id="GO:0031288">
    <property type="term" value="P:sorocarp morphogenesis"/>
    <property type="evidence" value="ECO:0000315"/>
    <property type="project" value="dictyBase"/>
</dbReference>
<dbReference type="CDD" id="cd03263">
    <property type="entry name" value="ABC_subfamily_A"/>
    <property type="match status" value="2"/>
</dbReference>
<dbReference type="FunFam" id="3.40.50.300:FF:002530">
    <property type="entry name" value="ABC transporter A family member 5"/>
    <property type="match status" value="1"/>
</dbReference>
<dbReference type="FunFam" id="3.40.50.300:FF:000298">
    <property type="entry name" value="ATP-binding cassette sub-family A member 12"/>
    <property type="match status" value="1"/>
</dbReference>
<dbReference type="Gene3D" id="3.40.50.300">
    <property type="entry name" value="P-loop containing nucleotide triphosphate hydrolases"/>
    <property type="match status" value="2"/>
</dbReference>
<dbReference type="InterPro" id="IPR003593">
    <property type="entry name" value="AAA+_ATPase"/>
</dbReference>
<dbReference type="InterPro" id="IPR013525">
    <property type="entry name" value="ABC2_TM"/>
</dbReference>
<dbReference type="InterPro" id="IPR003439">
    <property type="entry name" value="ABC_transporter-like_ATP-bd"/>
</dbReference>
<dbReference type="InterPro" id="IPR017871">
    <property type="entry name" value="ABC_transporter-like_CS"/>
</dbReference>
<dbReference type="InterPro" id="IPR026082">
    <property type="entry name" value="ABCA"/>
</dbReference>
<dbReference type="InterPro" id="IPR027417">
    <property type="entry name" value="P-loop_NTPase"/>
</dbReference>
<dbReference type="PANTHER" id="PTHR19229:SF36">
    <property type="entry name" value="ATP-BINDING CASSETTE SUB-FAMILY A MEMBER 2"/>
    <property type="match status" value="1"/>
</dbReference>
<dbReference type="PANTHER" id="PTHR19229">
    <property type="entry name" value="ATP-BINDING CASSETTE TRANSPORTER SUBFAMILY A ABCA"/>
    <property type="match status" value="1"/>
</dbReference>
<dbReference type="Pfam" id="PF12698">
    <property type="entry name" value="ABC2_membrane_3"/>
    <property type="match status" value="2"/>
</dbReference>
<dbReference type="Pfam" id="PF00005">
    <property type="entry name" value="ABC_tran"/>
    <property type="match status" value="2"/>
</dbReference>
<dbReference type="SMART" id="SM00382">
    <property type="entry name" value="AAA"/>
    <property type="match status" value="2"/>
</dbReference>
<dbReference type="SUPFAM" id="SSF52540">
    <property type="entry name" value="P-loop containing nucleoside triphosphate hydrolases"/>
    <property type="match status" value="2"/>
</dbReference>
<dbReference type="PROSITE" id="PS00211">
    <property type="entry name" value="ABC_TRANSPORTER_1"/>
    <property type="match status" value="2"/>
</dbReference>
<dbReference type="PROSITE" id="PS50893">
    <property type="entry name" value="ABC_TRANSPORTER_2"/>
    <property type="match status" value="2"/>
</dbReference>
<feature type="chain" id="PRO_0000363838" description="ABC transporter A family member 6">
    <location>
        <begin position="1"/>
        <end position="1631"/>
    </location>
</feature>
<feature type="transmembrane region" description="Helical" evidence="1">
    <location>
        <begin position="25"/>
        <end position="45"/>
    </location>
</feature>
<feature type="transmembrane region" description="Helical" evidence="1">
    <location>
        <begin position="242"/>
        <end position="262"/>
    </location>
</feature>
<feature type="transmembrane region" description="Helical" evidence="1">
    <location>
        <begin position="285"/>
        <end position="305"/>
    </location>
</feature>
<feature type="transmembrane region" description="Helical" evidence="1">
    <location>
        <begin position="317"/>
        <end position="337"/>
    </location>
</feature>
<feature type="transmembrane region" description="Helical" evidence="1">
    <location>
        <begin position="346"/>
        <end position="366"/>
    </location>
</feature>
<feature type="transmembrane region" description="Helical" evidence="1">
    <location>
        <begin position="372"/>
        <end position="392"/>
    </location>
</feature>
<feature type="transmembrane region" description="Helical" evidence="1">
    <location>
        <begin position="416"/>
        <end position="436"/>
    </location>
</feature>
<feature type="transmembrane region" description="Helical" evidence="1">
    <location>
        <begin position="866"/>
        <end position="886"/>
    </location>
</feature>
<feature type="transmembrane region" description="Helical" evidence="1">
    <location>
        <begin position="1047"/>
        <end position="1067"/>
    </location>
</feature>
<feature type="transmembrane region" description="Helical" evidence="1">
    <location>
        <begin position="1099"/>
        <end position="1119"/>
    </location>
</feature>
<feature type="transmembrane region" description="Helical" evidence="1">
    <location>
        <begin position="1127"/>
        <end position="1147"/>
    </location>
</feature>
<feature type="transmembrane region" description="Helical" evidence="1">
    <location>
        <begin position="1158"/>
        <end position="1178"/>
    </location>
</feature>
<feature type="transmembrane region" description="Helical" evidence="1">
    <location>
        <begin position="1198"/>
        <end position="1218"/>
    </location>
</feature>
<feature type="transmembrane region" description="Helical" evidence="1">
    <location>
        <begin position="1242"/>
        <end position="1262"/>
    </location>
</feature>
<feature type="domain" description="ABC transporter 1" evidence="2">
    <location>
        <begin position="491"/>
        <end position="724"/>
    </location>
</feature>
<feature type="domain" description="ABC transporter 2" evidence="2">
    <location>
        <begin position="1309"/>
        <end position="1544"/>
    </location>
</feature>
<feature type="binding site" evidence="2">
    <location>
        <begin position="527"/>
        <end position="534"/>
    </location>
    <ligand>
        <name>ATP</name>
        <dbReference type="ChEBI" id="CHEBI:30616"/>
        <label>1</label>
    </ligand>
</feature>
<feature type="binding site" evidence="2">
    <location>
        <begin position="1347"/>
        <end position="1354"/>
    </location>
    <ligand>
        <name>ATP</name>
        <dbReference type="ChEBI" id="CHEBI:30616"/>
        <label>2</label>
    </ligand>
</feature>
<gene>
    <name type="primary">abcA6</name>
    <name type="ORF">DDB_G0291245</name>
</gene>
<reference key="1">
    <citation type="journal article" date="2002" name="Eukaryot. Cell">
        <title>Evolutionary analyses of ABC transporters of Dictyostelium discoideum.</title>
        <authorList>
            <person name="Anjard C."/>
            <person name="Loomis W.F."/>
        </authorList>
    </citation>
    <scope>NUCLEOTIDE SEQUENCE [GENOMIC DNA]</scope>
    <scope>NOMENCLATURE</scope>
    <source>
        <strain>AX4</strain>
    </source>
</reference>
<reference key="2">
    <citation type="journal article" date="2005" name="Nature">
        <title>The genome of the social amoeba Dictyostelium discoideum.</title>
        <authorList>
            <person name="Eichinger L."/>
            <person name="Pachebat J.A."/>
            <person name="Gloeckner G."/>
            <person name="Rajandream M.A."/>
            <person name="Sucgang R."/>
            <person name="Berriman M."/>
            <person name="Song J."/>
            <person name="Olsen R."/>
            <person name="Szafranski K."/>
            <person name="Xu Q."/>
            <person name="Tunggal B."/>
            <person name="Kummerfeld S."/>
            <person name="Madera M."/>
            <person name="Konfortov B.A."/>
            <person name="Rivero F."/>
            <person name="Bankier A.T."/>
            <person name="Lehmann R."/>
            <person name="Hamlin N."/>
            <person name="Davies R."/>
            <person name="Gaudet P."/>
            <person name="Fey P."/>
            <person name="Pilcher K."/>
            <person name="Chen G."/>
            <person name="Saunders D."/>
            <person name="Sodergren E.J."/>
            <person name="Davis P."/>
            <person name="Kerhornou A."/>
            <person name="Nie X."/>
            <person name="Hall N."/>
            <person name="Anjard C."/>
            <person name="Hemphill L."/>
            <person name="Bason N."/>
            <person name="Farbrother P."/>
            <person name="Desany B."/>
            <person name="Just E."/>
            <person name="Morio T."/>
            <person name="Rost R."/>
            <person name="Churcher C.M."/>
            <person name="Cooper J."/>
            <person name="Haydock S."/>
            <person name="van Driessche N."/>
            <person name="Cronin A."/>
            <person name="Goodhead I."/>
            <person name="Muzny D.M."/>
            <person name="Mourier T."/>
            <person name="Pain A."/>
            <person name="Lu M."/>
            <person name="Harper D."/>
            <person name="Lindsay R."/>
            <person name="Hauser H."/>
            <person name="James K.D."/>
            <person name="Quiles M."/>
            <person name="Madan Babu M."/>
            <person name="Saito T."/>
            <person name="Buchrieser C."/>
            <person name="Wardroper A."/>
            <person name="Felder M."/>
            <person name="Thangavelu M."/>
            <person name="Johnson D."/>
            <person name="Knights A."/>
            <person name="Loulseged H."/>
            <person name="Mungall K.L."/>
            <person name="Oliver K."/>
            <person name="Price C."/>
            <person name="Quail M.A."/>
            <person name="Urushihara H."/>
            <person name="Hernandez J."/>
            <person name="Rabbinowitsch E."/>
            <person name="Steffen D."/>
            <person name="Sanders M."/>
            <person name="Ma J."/>
            <person name="Kohara Y."/>
            <person name="Sharp S."/>
            <person name="Simmonds M.N."/>
            <person name="Spiegler S."/>
            <person name="Tivey A."/>
            <person name="Sugano S."/>
            <person name="White B."/>
            <person name="Walker D."/>
            <person name="Woodward J.R."/>
            <person name="Winckler T."/>
            <person name="Tanaka Y."/>
            <person name="Shaulsky G."/>
            <person name="Schleicher M."/>
            <person name="Weinstock G.M."/>
            <person name="Rosenthal A."/>
            <person name="Cox E.C."/>
            <person name="Chisholm R.L."/>
            <person name="Gibbs R.A."/>
            <person name="Loomis W.F."/>
            <person name="Platzer M."/>
            <person name="Kay R.R."/>
            <person name="Williams J.G."/>
            <person name="Dear P.H."/>
            <person name="Noegel A.A."/>
            <person name="Barrell B.G."/>
            <person name="Kuspa A."/>
        </authorList>
    </citation>
    <scope>NUCLEOTIDE SEQUENCE [LARGE SCALE GENOMIC DNA]</scope>
    <source>
        <strain>AX4</strain>
    </source>
</reference>
<accession>Q8T6J1</accession>
<accession>Q54EM9</accession>
<sequence>MEFGRQLKTLLKKNLLLKGKSKCSICCEIVFPIVIIGVLFAILALIKVTNSDYNSIDVTTFSRRVGPENKLLYGSEGSLNNDQSGVIETMKEQVATARGLTVAEVQDFFMEINDRTLMESFFKNYSMMVYGGVWFNSSTNGGGGGNNNDPIAAGGQFGYNIRLDSDDTADTSETGKVDGGDSSIYLNDNFASIQVAMDQAIFGYFGLDMVLNISGRHYPDPYTELWQEWITGRDAIIKSAGSVFITAALMMFSFRLVTDVVIEKETKIVEAMRMMSLNSLAYFSSWIITSLITSLPVTLLIVVIFKGSQLIYSTSWGIVIITFVLYLITLLLLSFIFSIFFNNSKFCGLLSFVIVIAINICGIFVSKNEFSVSVKLLLSIFSPIAFSNSIYIMSVKDLTMILNLNWDYIVTENQSILMLGIDIIIYIILIWYFEKVIPGEYGTKEKFYFLFTKNYWFGKKRSIGEIDDIESTFDSEDVETIPLKVLKNSTISIRNLRKEFETGDGLRVAVNDLYLDMFEDQIHALLGPNGCGKSTTIGMLTGLISPTSGSAFIRGYDITSQMSKIRPYIGCCLQTDIIWSQLTVLEHLVIYASLKGVEGRNIQREAERMATEVGLAEKMNAPAGSLSGGQKRKLCLGIAFIGRSKIIFLDEVTSGMDPVSRRQVWDFLLKYKKGKTIILTTHYLEEADYLGDRIAIISQGKLRCDGTSLFLKNRFGQGYLLTCNKKLENASNGFNTNQVSEFIKNFIPGASILTDSGAELSYRLPTESLSNFPQFFTEFDLNLSKFSIQTYGISVTSLEEVFISLGQEDSKKLNNNANGNNEFNKQNEMESLKLAIATPSDGINQIQQFKGLLIKRIQQSKKDARSFFLSIILPMALIIGSIILYKSMNDQKQVLFYNNSTQPLTMSLSIYTDSDNTINVPMQLLNNELEWSNLFNNSPYFNKFKYINESINFNDYLIDNYKLSIGAINFTNQPISIDDNNNGQSTNCSYIAYYNSDYIHSFPIHVNLINDALLRKFKNISISVTSMPFDHILTAFEISSSDINASAIIYFVFILMAGFSLMAGSFAGSIAQERTNRVKRLLYVSGCKKHIYWLSNLVWDFFFAFIISILSCSILAGVIKGAFKEQFGSFLLCLILLSCAIIPLGYLMSYKFQTYGKAVGAITAILFVFGLVFTIASLNVRIQAVVNQNSTTQKVADIIDLIFSIISPIFALNRIVFILSGFPGSTRLGTFKVDNYWSFDYLGTPLIVLAGHAVLWNVWILLLDYVPQIKGFFKNPKNLPAPSPPQDEDYDVSQERRRLLNMRPSEEPIQFKNLHKLFPGSGKNPSKTAVYNSTLGIPRGQTFGLLGLNGGGKSTTLSMLSGEIVPSSGEISINGYDVITNREKALGNISMVFQFDALISLLSAREHLWLFSRIKGIKESQIENCVEAFIKMVDLTRIANSGCGGYSGGNKRKVSLSMAMLGNPSVCFLDEISCGCDAVVRRQLWDVISELGKDKSIILTSHSMSEVEALCSRITIMKEGKYTCLNTIQGVKNRFGAGYSIDVKFKKEYLETGIQTILQSIPNCTVLDQHDVMASFEVPNPPGNPIKLSNIFSILSNLPILDDYNVGQTSLESVFLKLTGANHDQRINLYD</sequence>
<organism>
    <name type="scientific">Dictyostelium discoideum</name>
    <name type="common">Social amoeba</name>
    <dbReference type="NCBI Taxonomy" id="44689"/>
    <lineage>
        <taxon>Eukaryota</taxon>
        <taxon>Amoebozoa</taxon>
        <taxon>Evosea</taxon>
        <taxon>Eumycetozoa</taxon>
        <taxon>Dictyostelia</taxon>
        <taxon>Dictyosteliales</taxon>
        <taxon>Dictyosteliaceae</taxon>
        <taxon>Dictyostelium</taxon>
    </lineage>
</organism>
<keyword id="KW-0067">ATP-binding</keyword>
<keyword id="KW-0472">Membrane</keyword>
<keyword id="KW-0547">Nucleotide-binding</keyword>
<keyword id="KW-1185">Reference proteome</keyword>
<keyword id="KW-0677">Repeat</keyword>
<keyword id="KW-0812">Transmembrane</keyword>
<keyword id="KW-1133">Transmembrane helix</keyword>
<keyword id="KW-0813">Transport</keyword>